<dbReference type="EMBL" id="M16816">
    <property type="protein sequence ID" value="AAA98063.1"/>
    <property type="molecule type" value="Genomic_DNA"/>
</dbReference>
<dbReference type="PIR" id="A27089">
    <property type="entry name" value="IKECBB"/>
</dbReference>
<dbReference type="RefSeq" id="WP_001282376.1">
    <property type="nucleotide sequence ID" value="NZ_WVVE01000043.1"/>
</dbReference>
<dbReference type="RefSeq" id="YP_008998007.1">
    <property type="nucleotide sequence ID" value="NC_023315.1"/>
</dbReference>
<dbReference type="PDB" id="1RH1">
    <property type="method" value="X-ray"/>
    <property type="resolution" value="2.50 A"/>
    <property type="chains" value="A=2-511"/>
</dbReference>
<dbReference type="PDBsum" id="1RH1"/>
<dbReference type="SMR" id="P05819"/>
<dbReference type="TCDB" id="1.C.1.3.2">
    <property type="family name" value="the channel-forming colicin (colicin) family"/>
</dbReference>
<dbReference type="EvolutionaryTrace" id="P05819"/>
<dbReference type="GO" id="GO:0005886">
    <property type="term" value="C:plasma membrane"/>
    <property type="evidence" value="ECO:0007669"/>
    <property type="project" value="UniProtKB-SubCell"/>
</dbReference>
<dbReference type="GO" id="GO:0140911">
    <property type="term" value="F:pore-forming activity"/>
    <property type="evidence" value="ECO:0007669"/>
    <property type="project" value="InterPro"/>
</dbReference>
<dbReference type="GO" id="GO:0050829">
    <property type="term" value="P:defense response to Gram-negative bacterium"/>
    <property type="evidence" value="ECO:0007669"/>
    <property type="project" value="InterPro"/>
</dbReference>
<dbReference type="GO" id="GO:0031640">
    <property type="term" value="P:killing of cells of another organism"/>
    <property type="evidence" value="ECO:0007669"/>
    <property type="project" value="UniProtKB-KW"/>
</dbReference>
<dbReference type="Gene3D" id="1.10.490.30">
    <property type="entry name" value="Colicin"/>
    <property type="match status" value="1"/>
</dbReference>
<dbReference type="InterPro" id="IPR000293">
    <property type="entry name" value="Channel_colicin_C"/>
</dbReference>
<dbReference type="InterPro" id="IPR038283">
    <property type="entry name" value="Channel_colicin_C_sf"/>
</dbReference>
<dbReference type="InterPro" id="IPR016128">
    <property type="entry name" value="Pyosin/cloacin_T_dom"/>
</dbReference>
<dbReference type="InterPro" id="IPR036302">
    <property type="entry name" value="Pyosin/cloacin_T_dom_sf"/>
</dbReference>
<dbReference type="Pfam" id="PF03515">
    <property type="entry name" value="Cloacin"/>
    <property type="match status" value="1"/>
</dbReference>
<dbReference type="Pfam" id="PF01024">
    <property type="entry name" value="Colicin"/>
    <property type="match status" value="1"/>
</dbReference>
<dbReference type="PRINTS" id="PR00280">
    <property type="entry name" value="CHANLCOLICIN"/>
</dbReference>
<dbReference type="SUPFAM" id="SSF69369">
    <property type="entry name" value="Cloacin translocation domain"/>
    <property type="match status" value="1"/>
</dbReference>
<dbReference type="SUPFAM" id="SSF56837">
    <property type="entry name" value="Colicin"/>
    <property type="match status" value="1"/>
</dbReference>
<dbReference type="PROSITE" id="PS00276">
    <property type="entry name" value="CHANNEL_COLICIN"/>
    <property type="match status" value="1"/>
</dbReference>
<dbReference type="PROSITE" id="PS00430">
    <property type="entry name" value="TONB_DEPENDENT_REC_1"/>
    <property type="match status" value="1"/>
</dbReference>
<protein>
    <recommendedName>
        <fullName>Colicin-B</fullName>
    </recommendedName>
</protein>
<comment type="function">
    <text>This colicin is a channel-forming colicin. This class of transmembrane toxins depolarize the cytoplasmic membrane, leading to dissipation of cellular energy.</text>
</comment>
<comment type="function">
    <text>Colicins are polypeptide toxins produced by and active against E.coli and closely related bacteria.</text>
</comment>
<comment type="subcellular location">
    <subcellularLocation>
        <location evidence="2">Cell membrane</location>
        <topology evidence="2">Multi-pass membrane protein</topology>
    </subcellularLocation>
</comment>
<comment type="miscellaneous">
    <text>This colicin requires TonB for its uptake.</text>
</comment>
<comment type="similarity">
    <text evidence="2">Belongs to the channel forming colicin family.</text>
</comment>
<sequence length="511" mass="54863">MSDNEGSVPTEGIDYGDTMVVWPSTGRIPGGDVKPGGSSGLAPSMPPGWGDYSPQGIALVQSVLFPGIIRRIILDKELEEGDWSGWSVSVHSPWGNEKVSAARTVLENGLRGGLPEPSRPAAVSFARLEPASGNEQKIIRLMVTQQLEQVTDIPASQLPAAGNNVPVKYRLTDLMQNGTQYMAIIGGIPMTVPVVDAVPVPDRSRPGTNIKDVYSAPVSPNLPDLVLSVGQMNTPVRSNPEIQEDGVISETGNYVEAGYTMSSNNHDVIVRFPEGSGVSPLYISAVEILDSNSLSQRQEAENNAKDDFRVKKEQENDEKTVLTKTSEVIISVGDKVGEYLGDKYKALSREIAENINNFQGKTIRSYDDAMSSINKLMANPSLKINATDKEAIVNAWKAFNAEDMGNKFAALGKTFKAADYAIKANNIREKSIEGYQTGNWGPLMLEVESWVISGMASAVALSLFSLTLGSALIAFGLSATVVGFVGVVIAGAIGAFIDDKFVDELNHKIIK</sequence>
<accession>P05819</accession>
<geneLocation type="plasmid">
    <name>ColBM-pF166</name>
</geneLocation>
<reference key="1">
    <citation type="journal article" date="1987" name="J. Bacteriol.">
        <title>Nucleotide sequence of the colicin B activity gene cba: consensus pentapeptide among TonB-dependent colicins and receptors.</title>
        <authorList>
            <person name="Schramm E."/>
            <person name="Mende J."/>
            <person name="Braun V."/>
            <person name="Kamp R.M."/>
        </authorList>
    </citation>
    <scope>NUCLEOTIDE SEQUENCE [GENOMIC DNA]</scope>
    <scope>PARTIAL PROTEIN SEQUENCE</scope>
</reference>
<gene>
    <name type="primary">cba</name>
</gene>
<keyword id="KW-0002">3D-structure</keyword>
<keyword id="KW-0044">Antibiotic</keyword>
<keyword id="KW-0929">Antimicrobial</keyword>
<keyword id="KW-0078">Bacteriocin</keyword>
<keyword id="KW-1003">Cell membrane</keyword>
<keyword id="KW-0903">Direct protein sequencing</keyword>
<keyword id="KW-0472">Membrane</keyword>
<keyword id="KW-0614">Plasmid</keyword>
<keyword id="KW-0798">TonB box</keyword>
<keyword id="KW-0812">Transmembrane</keyword>
<keyword id="KW-1133">Transmembrane helix</keyword>
<name>CEAB_ECOLX</name>
<organism>
    <name type="scientific">Escherichia coli</name>
    <dbReference type="NCBI Taxonomy" id="562"/>
    <lineage>
        <taxon>Bacteria</taxon>
        <taxon>Pseudomonadati</taxon>
        <taxon>Pseudomonadota</taxon>
        <taxon>Gammaproteobacteria</taxon>
        <taxon>Enterobacterales</taxon>
        <taxon>Enterobacteriaceae</taxon>
        <taxon>Escherichia</taxon>
    </lineage>
</organism>
<proteinExistence type="evidence at protein level"/>
<feature type="initiator methionine" description="Removed">
    <location>
        <position position="1"/>
    </location>
</feature>
<feature type="chain" id="PRO_0000218687" description="Colicin-B">
    <location>
        <begin position="2"/>
        <end position="511"/>
    </location>
</feature>
<feature type="transmembrane region" description="Helical" evidence="1">
    <location>
        <begin position="455"/>
        <end position="475"/>
    </location>
</feature>
<feature type="transmembrane region" description="Helical" evidence="1">
    <location>
        <begin position="477"/>
        <end position="497"/>
    </location>
</feature>
<feature type="short sequence motif" description="TonB box">
    <location>
        <begin position="17"/>
        <end position="24"/>
    </location>
</feature>
<feature type="helix" evidence="3">
    <location>
        <begin position="12"/>
        <end position="17"/>
    </location>
</feature>
<feature type="strand" evidence="3">
    <location>
        <begin position="20"/>
        <end position="22"/>
    </location>
</feature>
<feature type="strand" evidence="3">
    <location>
        <begin position="50"/>
        <end position="52"/>
    </location>
</feature>
<feature type="strand" evidence="3">
    <location>
        <begin position="62"/>
        <end position="64"/>
    </location>
</feature>
<feature type="strand" evidence="3">
    <location>
        <begin position="70"/>
        <end position="73"/>
    </location>
</feature>
<feature type="turn" evidence="3">
    <location>
        <begin position="74"/>
        <end position="81"/>
    </location>
</feature>
<feature type="strand" evidence="3">
    <location>
        <begin position="87"/>
        <end position="90"/>
    </location>
</feature>
<feature type="helix" evidence="3">
    <location>
        <begin position="99"/>
        <end position="110"/>
    </location>
</feature>
<feature type="strand" evidence="3">
    <location>
        <begin position="121"/>
        <end position="128"/>
    </location>
</feature>
<feature type="strand" evidence="3">
    <location>
        <begin position="139"/>
        <end position="146"/>
    </location>
</feature>
<feature type="helix" evidence="3">
    <location>
        <begin position="147"/>
        <end position="150"/>
    </location>
</feature>
<feature type="helix" evidence="3">
    <location>
        <begin position="155"/>
        <end position="157"/>
    </location>
</feature>
<feature type="strand" evidence="3">
    <location>
        <begin position="161"/>
        <end position="176"/>
    </location>
</feature>
<feature type="strand" evidence="3">
    <location>
        <begin position="179"/>
        <end position="196"/>
    </location>
</feature>
<feature type="strand" evidence="3">
    <location>
        <begin position="198"/>
        <end position="201"/>
    </location>
</feature>
<feature type="strand" evidence="3">
    <location>
        <begin position="208"/>
        <end position="216"/>
    </location>
</feature>
<feature type="strand" evidence="3">
    <location>
        <begin position="220"/>
        <end position="222"/>
    </location>
</feature>
<feature type="strand" evidence="3">
    <location>
        <begin position="225"/>
        <end position="228"/>
    </location>
</feature>
<feature type="turn" evidence="3">
    <location>
        <begin position="230"/>
        <end position="233"/>
    </location>
</feature>
<feature type="strand" evidence="3">
    <location>
        <begin position="252"/>
        <end position="256"/>
    </location>
</feature>
<feature type="strand" evidence="3">
    <location>
        <begin position="259"/>
        <end position="262"/>
    </location>
</feature>
<feature type="strand" evidence="3">
    <location>
        <begin position="266"/>
        <end position="271"/>
    </location>
</feature>
<feature type="strand" evidence="3">
    <location>
        <begin position="281"/>
        <end position="286"/>
    </location>
</feature>
<feature type="helix" evidence="3">
    <location>
        <begin position="291"/>
        <end position="340"/>
    </location>
</feature>
<feature type="helix" evidence="3">
    <location>
        <begin position="342"/>
        <end position="357"/>
    </location>
</feature>
<feature type="helix" evidence="3">
    <location>
        <begin position="366"/>
        <end position="376"/>
    </location>
</feature>
<feature type="helix" evidence="3">
    <location>
        <begin position="386"/>
        <end position="398"/>
    </location>
</feature>
<feature type="helix" evidence="3">
    <location>
        <begin position="401"/>
        <end position="406"/>
    </location>
</feature>
<feature type="strand" evidence="3">
    <location>
        <begin position="409"/>
        <end position="413"/>
    </location>
</feature>
<feature type="strand" evidence="3">
    <location>
        <begin position="415"/>
        <end position="417"/>
    </location>
</feature>
<feature type="helix" evidence="3">
    <location>
        <begin position="420"/>
        <end position="435"/>
    </location>
</feature>
<feature type="strand" evidence="3">
    <location>
        <begin position="436"/>
        <end position="438"/>
    </location>
</feature>
<feature type="helix" evidence="3">
    <location>
        <begin position="441"/>
        <end position="452"/>
    </location>
</feature>
<feature type="helix" evidence="3">
    <location>
        <begin position="457"/>
        <end position="472"/>
    </location>
</feature>
<feature type="helix" evidence="3">
    <location>
        <begin position="479"/>
        <end position="495"/>
    </location>
</feature>
<feature type="helix" evidence="3">
    <location>
        <begin position="500"/>
        <end position="508"/>
    </location>
</feature>
<evidence type="ECO:0000255" key="1"/>
<evidence type="ECO:0000305" key="2"/>
<evidence type="ECO:0007829" key="3">
    <source>
        <dbReference type="PDB" id="1RH1"/>
    </source>
</evidence>